<reference key="1">
    <citation type="journal article" date="2006" name="J. Bacteriol.">
        <title>Comparative genomic evidence for a close relationship between the dimorphic prosthecate bacteria Hyphomonas neptunium and Caulobacter crescentus.</title>
        <authorList>
            <person name="Badger J.H."/>
            <person name="Hoover T.R."/>
            <person name="Brun Y.V."/>
            <person name="Weiner R.M."/>
            <person name="Laub M.T."/>
            <person name="Alexandre G."/>
            <person name="Mrazek J."/>
            <person name="Ren Q."/>
            <person name="Paulsen I.T."/>
            <person name="Nelson K.E."/>
            <person name="Khouri H.M."/>
            <person name="Radune D."/>
            <person name="Sosa J."/>
            <person name="Dodson R.J."/>
            <person name="Sullivan S.A."/>
            <person name="Rosovitz M.J."/>
            <person name="Madupu R."/>
            <person name="Brinkac L.M."/>
            <person name="Durkin A.S."/>
            <person name="Daugherty S.C."/>
            <person name="Kothari S.P."/>
            <person name="Giglio M.G."/>
            <person name="Zhou L."/>
            <person name="Haft D.H."/>
            <person name="Selengut J.D."/>
            <person name="Davidsen T.M."/>
            <person name="Yang Q."/>
            <person name="Zafar N."/>
            <person name="Ward N.L."/>
        </authorList>
    </citation>
    <scope>NUCLEOTIDE SEQUENCE [LARGE SCALE GENOMIC DNA]</scope>
    <source>
        <strain>ATCC 15444</strain>
    </source>
</reference>
<gene>
    <name evidence="1" type="primary">dapA</name>
    <name type="ordered locus">HNE_2800</name>
</gene>
<name>DAPA_HYPNA</name>
<keyword id="KW-0028">Amino-acid biosynthesis</keyword>
<keyword id="KW-0963">Cytoplasm</keyword>
<keyword id="KW-0220">Diaminopimelate biosynthesis</keyword>
<keyword id="KW-0456">Lyase</keyword>
<keyword id="KW-0457">Lysine biosynthesis</keyword>
<keyword id="KW-1185">Reference proteome</keyword>
<keyword id="KW-0704">Schiff base</keyword>
<comment type="function">
    <text evidence="1">Catalyzes the condensation of (S)-aspartate-beta-semialdehyde [(S)-ASA] and pyruvate to 4-hydroxy-tetrahydrodipicolinate (HTPA).</text>
</comment>
<comment type="catalytic activity">
    <reaction evidence="1">
        <text>L-aspartate 4-semialdehyde + pyruvate = (2S,4S)-4-hydroxy-2,3,4,5-tetrahydrodipicolinate + H2O + H(+)</text>
        <dbReference type="Rhea" id="RHEA:34171"/>
        <dbReference type="ChEBI" id="CHEBI:15361"/>
        <dbReference type="ChEBI" id="CHEBI:15377"/>
        <dbReference type="ChEBI" id="CHEBI:15378"/>
        <dbReference type="ChEBI" id="CHEBI:67139"/>
        <dbReference type="ChEBI" id="CHEBI:537519"/>
        <dbReference type="EC" id="4.3.3.7"/>
    </reaction>
</comment>
<comment type="pathway">
    <text evidence="1">Amino-acid biosynthesis; L-lysine biosynthesis via DAP pathway; (S)-tetrahydrodipicolinate from L-aspartate: step 3/4.</text>
</comment>
<comment type="subunit">
    <text evidence="1">Homotetramer; dimer of dimers.</text>
</comment>
<comment type="subcellular location">
    <subcellularLocation>
        <location evidence="1">Cytoplasm</location>
    </subcellularLocation>
</comment>
<comment type="similarity">
    <text evidence="1">Belongs to the DapA family.</text>
</comment>
<comment type="caution">
    <text evidence="2">Was originally thought to be a dihydrodipicolinate synthase (DHDPS), catalyzing the condensation of (S)-aspartate-beta-semialdehyde [(S)-ASA] and pyruvate to dihydrodipicolinate (DHDP). However, it was shown in E.coli that the product of the enzymatic reaction is not dihydrodipicolinate but in fact (4S)-4-hydroxy-2,3,4,5-tetrahydro-(2S)-dipicolinic acid (HTPA), and that the consecutive dehydration reaction leading to DHDP is not spontaneous but catalyzed by DapB.</text>
</comment>
<accession>Q0BYG4</accession>
<feature type="chain" id="PRO_1000050199" description="4-hydroxy-tetrahydrodipicolinate synthase">
    <location>
        <begin position="1"/>
        <end position="293"/>
    </location>
</feature>
<feature type="active site" description="Proton donor/acceptor" evidence="1">
    <location>
        <position position="132"/>
    </location>
</feature>
<feature type="active site" description="Schiff-base intermediate with substrate" evidence="1">
    <location>
        <position position="160"/>
    </location>
</feature>
<feature type="binding site" evidence="1">
    <location>
        <position position="44"/>
    </location>
    <ligand>
        <name>pyruvate</name>
        <dbReference type="ChEBI" id="CHEBI:15361"/>
    </ligand>
</feature>
<feature type="binding site" evidence="1">
    <location>
        <position position="204"/>
    </location>
    <ligand>
        <name>pyruvate</name>
        <dbReference type="ChEBI" id="CHEBI:15361"/>
    </ligand>
</feature>
<feature type="site" description="Part of a proton relay during catalysis" evidence="1">
    <location>
        <position position="43"/>
    </location>
</feature>
<feature type="site" description="Part of a proton relay during catalysis" evidence="1">
    <location>
        <position position="106"/>
    </location>
</feature>
<organism>
    <name type="scientific">Hyphomonas neptunium (strain ATCC 15444)</name>
    <dbReference type="NCBI Taxonomy" id="228405"/>
    <lineage>
        <taxon>Bacteria</taxon>
        <taxon>Pseudomonadati</taxon>
        <taxon>Pseudomonadota</taxon>
        <taxon>Alphaproteobacteria</taxon>
        <taxon>Hyphomonadales</taxon>
        <taxon>Hyphomonadaceae</taxon>
        <taxon>Hyphomonas</taxon>
    </lineage>
</organism>
<proteinExistence type="inferred from homology"/>
<evidence type="ECO:0000255" key="1">
    <source>
        <dbReference type="HAMAP-Rule" id="MF_00418"/>
    </source>
</evidence>
<evidence type="ECO:0000305" key="2"/>
<dbReference type="EC" id="4.3.3.7" evidence="1"/>
<dbReference type="EMBL" id="CP000158">
    <property type="protein sequence ID" value="ABI76702.1"/>
    <property type="molecule type" value="Genomic_DNA"/>
</dbReference>
<dbReference type="RefSeq" id="WP_011647776.1">
    <property type="nucleotide sequence ID" value="NC_008358.1"/>
</dbReference>
<dbReference type="SMR" id="Q0BYG4"/>
<dbReference type="STRING" id="228405.HNE_2800"/>
<dbReference type="KEGG" id="hne:HNE_2800"/>
<dbReference type="eggNOG" id="COG0329">
    <property type="taxonomic scope" value="Bacteria"/>
</dbReference>
<dbReference type="HOGENOM" id="CLU_049343_7_1_5"/>
<dbReference type="UniPathway" id="UPA00034">
    <property type="reaction ID" value="UER00017"/>
</dbReference>
<dbReference type="Proteomes" id="UP000001959">
    <property type="component" value="Chromosome"/>
</dbReference>
<dbReference type="GO" id="GO:0005829">
    <property type="term" value="C:cytosol"/>
    <property type="evidence" value="ECO:0007669"/>
    <property type="project" value="TreeGrafter"/>
</dbReference>
<dbReference type="GO" id="GO:0008840">
    <property type="term" value="F:4-hydroxy-tetrahydrodipicolinate synthase activity"/>
    <property type="evidence" value="ECO:0007669"/>
    <property type="project" value="UniProtKB-UniRule"/>
</dbReference>
<dbReference type="GO" id="GO:0019877">
    <property type="term" value="P:diaminopimelate biosynthetic process"/>
    <property type="evidence" value="ECO:0007669"/>
    <property type="project" value="UniProtKB-UniRule"/>
</dbReference>
<dbReference type="GO" id="GO:0009089">
    <property type="term" value="P:lysine biosynthetic process via diaminopimelate"/>
    <property type="evidence" value="ECO:0007669"/>
    <property type="project" value="UniProtKB-UniRule"/>
</dbReference>
<dbReference type="CDD" id="cd00950">
    <property type="entry name" value="DHDPS"/>
    <property type="match status" value="1"/>
</dbReference>
<dbReference type="Gene3D" id="3.20.20.70">
    <property type="entry name" value="Aldolase class I"/>
    <property type="match status" value="1"/>
</dbReference>
<dbReference type="HAMAP" id="MF_00418">
    <property type="entry name" value="DapA"/>
    <property type="match status" value="1"/>
</dbReference>
<dbReference type="InterPro" id="IPR013785">
    <property type="entry name" value="Aldolase_TIM"/>
</dbReference>
<dbReference type="InterPro" id="IPR005263">
    <property type="entry name" value="DapA"/>
</dbReference>
<dbReference type="InterPro" id="IPR002220">
    <property type="entry name" value="DapA-like"/>
</dbReference>
<dbReference type="InterPro" id="IPR020625">
    <property type="entry name" value="Schiff_base-form_aldolases_AS"/>
</dbReference>
<dbReference type="NCBIfam" id="TIGR00674">
    <property type="entry name" value="dapA"/>
    <property type="match status" value="1"/>
</dbReference>
<dbReference type="PANTHER" id="PTHR12128:SF66">
    <property type="entry name" value="4-HYDROXY-2-OXOGLUTARATE ALDOLASE, MITOCHONDRIAL"/>
    <property type="match status" value="1"/>
</dbReference>
<dbReference type="PANTHER" id="PTHR12128">
    <property type="entry name" value="DIHYDRODIPICOLINATE SYNTHASE"/>
    <property type="match status" value="1"/>
</dbReference>
<dbReference type="Pfam" id="PF00701">
    <property type="entry name" value="DHDPS"/>
    <property type="match status" value="1"/>
</dbReference>
<dbReference type="PIRSF" id="PIRSF001365">
    <property type="entry name" value="DHDPS"/>
    <property type="match status" value="1"/>
</dbReference>
<dbReference type="PRINTS" id="PR00146">
    <property type="entry name" value="DHPICSNTHASE"/>
</dbReference>
<dbReference type="SMART" id="SM01130">
    <property type="entry name" value="DHDPS"/>
    <property type="match status" value="1"/>
</dbReference>
<dbReference type="SUPFAM" id="SSF51569">
    <property type="entry name" value="Aldolase"/>
    <property type="match status" value="1"/>
</dbReference>
<dbReference type="PROSITE" id="PS00666">
    <property type="entry name" value="DHDPS_2"/>
    <property type="match status" value="1"/>
</dbReference>
<sequence length="293" mass="30329">MFHGSIPALVTPFKNGAVDEAAFAALVERQIAAGSAALVPVGTTGETSTLSTEEHKRVVSLCVEVAAGRVPVIAGAGSNSTDEAIDLVAHAKAAGADAALVVSPYYNNPNQDGLFEHFRAINDAVALPVVLYNVPSRTVVDLKPETVARLARLPNIVGIKDATGDMDRVSYHSALIGDEEQFVQLSGDDPSALGFLAMGGAGCISVTANVAPELCAAMHLAFEDGDLESARAIERRLINLHRAMFCSPSPGPAKYALSRMGLCGPEVRLPLTAPDAAAEAMIDAAMALAGLNT</sequence>
<protein>
    <recommendedName>
        <fullName evidence="1">4-hydroxy-tetrahydrodipicolinate synthase</fullName>
        <shortName evidence="1">HTPA synthase</shortName>
        <ecNumber evidence="1">4.3.3.7</ecNumber>
    </recommendedName>
</protein>